<protein>
    <recommendedName>
        <fullName evidence="1">Non-structural protein 1</fullName>
        <shortName evidence="1">NS1</shortName>
    </recommendedName>
    <alternativeName>
        <fullName evidence="1">NS1A</fullName>
    </alternativeName>
</protein>
<proteinExistence type="evidence at protein level"/>
<organismHost>
    <name type="scientific">Aves</name>
    <dbReference type="NCBI Taxonomy" id="8782"/>
</organismHost>
<organismHost>
    <name type="scientific">Sus scrofa</name>
    <name type="common">Pig</name>
    <dbReference type="NCBI Taxonomy" id="9823"/>
</organismHost>
<comment type="function">
    <text evidence="1">Inhibits post-transcriptional processing of cellular pre-mRNA, by binding and inhibiting two cellular proteins that are required for the 3'-end processing of cellular pre-mRNAs: the 30 kDa cleavage and polyadenylation specificity factor/CPSF4 and the poly(A)-binding protein 2/PABPN1. In turn, unprocessed 3' end pre-mRNAs accumulate in the host nucleus and are no longer exported to the cytoplasm. Cellular protein synthesis is thereby shut off very early after virus infection. Viral protein synthesis is not affected by the inhibition of the cellular 3' end processing machinery because the poly(A) tails of viral mRNAs are produced by the viral polymerase through a stuttering mechanism. Prevents the establishment of the cellular antiviral state by inhibiting TRIM25-mediated RIGI ubiquitination, which normally triggers the antiviral transduction signal that leads to the activation of type I IFN genes by transcription factors IRF3 and IRF7. Also binds poly(A) and U6 snRNA. Inhibits the integrated stress response (ISR) in the infected cell by blocking dsRNA binding by EIF2AK2/PKR and further phosphorylation of EIF2S1/EIF-2ALPHA. Stress granule formation is thus inhibited, which allows protein synthesis and viral replication.</text>
</comment>
<comment type="subunit">
    <text evidence="1">Homodimer. Interacts with host TRIM25 (via coiled coil); this interaction specifically inhibits TRIM25 multimerization and TRIM25-mediated RIGI CARD ubiquitination. Interacts with human EIF2AK2/PKR, CPSF4, IVNS1ABP and PABPN1.</text>
</comment>
<comment type="subcellular location">
    <subcellularLocation>
        <location evidence="1">Host nucleus</location>
    </subcellularLocation>
    <subcellularLocation>
        <location evidence="1">Host cytoplasm</location>
    </subcellularLocation>
    <text evidence="1">In uninfected, transfected cells, NS1 is localized in the nucleus. Only in virus infected cells, the nuclear export signal is unveiled, presumably by a viral protein, and a fraction of NS1 is exported in the cytoplasm.</text>
</comment>
<comment type="alternative products">
    <event type="alternative splicing"/>
    <isoform>
        <id>P69270-1</id>
        <name>NS1</name>
        <sequence type="displayed"/>
    </isoform>
    <isoform>
        <id>P69261-1</id>
        <name>NEP</name>
        <name>NS2</name>
        <sequence type="external"/>
    </isoform>
</comment>
<comment type="domain">
    <text evidence="1">The dsRNA-binding region is required for suppression of RNA silencing.</text>
</comment>
<comment type="PTM">
    <text evidence="1">Upon interferon induction, ISGylated via host HERC5; this results in the impairment of NS1 interaction with RNA targets due to its inability to form homodimers and to interact with host EIF2AK2/PKR.</text>
</comment>
<comment type="similarity">
    <text evidence="1">Belongs to the influenza A viruses NS1 family.</text>
</comment>
<feature type="chain" id="PRO_0000078925" description="Non-structural protein 1">
    <location>
        <begin position="1"/>
        <end position="230"/>
    </location>
</feature>
<feature type="region of interest" description="RNA-binding and homodimerization" evidence="1">
    <location>
        <begin position="1"/>
        <end position="73"/>
    </location>
</feature>
<feature type="region of interest" description="CPSF4-binding" evidence="1">
    <location>
        <begin position="180"/>
        <end position="215"/>
    </location>
</feature>
<feature type="region of interest" description="Disordered" evidence="2">
    <location>
        <begin position="209"/>
        <end position="230"/>
    </location>
</feature>
<feature type="region of interest" description="PABPN1-binding" evidence="1">
    <location>
        <begin position="223"/>
        <end position="230"/>
    </location>
</feature>
<feature type="short sequence motif" description="Nuclear localization signal" evidence="1">
    <location>
        <begin position="34"/>
        <end position="38"/>
    </location>
</feature>
<feature type="short sequence motif" description="Nuclear export signal" evidence="1">
    <location>
        <begin position="137"/>
        <end position="146"/>
    </location>
</feature>
<feature type="strand" evidence="3">
    <location>
        <begin position="88"/>
        <end position="93"/>
    </location>
</feature>
<feature type="helix" evidence="3">
    <location>
        <begin position="95"/>
        <end position="99"/>
    </location>
</feature>
<feature type="strand" evidence="3">
    <location>
        <begin position="105"/>
        <end position="112"/>
    </location>
</feature>
<feature type="strand" evidence="3">
    <location>
        <begin position="115"/>
        <end position="120"/>
    </location>
</feature>
<feature type="strand" evidence="3">
    <location>
        <begin position="127"/>
        <end position="137"/>
    </location>
</feature>
<feature type="strand" evidence="3">
    <location>
        <begin position="140"/>
        <end position="151"/>
    </location>
</feature>
<feature type="strand" evidence="3">
    <location>
        <begin position="156"/>
        <end position="162"/>
    </location>
</feature>
<feature type="strand" evidence="4">
    <location>
        <begin position="164"/>
        <end position="166"/>
    </location>
</feature>
<feature type="helix" evidence="3">
    <location>
        <begin position="171"/>
        <end position="186"/>
    </location>
</feature>
<feature type="turn" evidence="3">
    <location>
        <begin position="187"/>
        <end position="189"/>
    </location>
</feature>
<feature type="strand" evidence="3">
    <location>
        <begin position="191"/>
        <end position="194"/>
    </location>
</feature>
<feature type="helix" evidence="3">
    <location>
        <begin position="196"/>
        <end position="201"/>
    </location>
</feature>
<keyword id="KW-0002">3D-structure</keyword>
<keyword id="KW-0025">Alternative splicing</keyword>
<keyword id="KW-1262">Eukaryotic host gene expression shutoff by virus</keyword>
<keyword id="KW-1035">Host cytoplasm</keyword>
<keyword id="KW-1190">Host gene expression shutoff by virus</keyword>
<keyword id="KW-1192">Host mRNA suppression by virus</keyword>
<keyword id="KW-1048">Host nucleus</keyword>
<keyword id="KW-0945">Host-virus interaction</keyword>
<keyword id="KW-1090">Inhibition of host innate immune response by virus</keyword>
<keyword id="KW-1114">Inhibition of host interferon signaling pathway by virus</keyword>
<keyword id="KW-1102">Inhibition of host PKR by virus</keyword>
<keyword id="KW-1103">Inhibition of host pre-mRNA processing by virus</keyword>
<keyword id="KW-1088">Inhibition of host RIG-I by virus</keyword>
<keyword id="KW-1113">Inhibition of host RLR pathway by virus</keyword>
<keyword id="KW-0922">Interferon antiviral system evasion</keyword>
<keyword id="KW-0694">RNA-binding</keyword>
<keyword id="KW-0832">Ubl conjugation</keyword>
<keyword id="KW-0899">Viral immunoevasion</keyword>
<dbReference type="EMBL" id="J02105">
    <property type="protein sequence ID" value="AAA43509.1"/>
    <property type="molecule type" value="Genomic_RNA"/>
</dbReference>
<dbReference type="PIR" id="A04092">
    <property type="entry name" value="MNIV16"/>
</dbReference>
<dbReference type="PDB" id="3D6R">
    <property type="method" value="X-ray"/>
    <property type="resolution" value="2.00 A"/>
    <property type="chains" value="A/B=73-230"/>
</dbReference>
<dbReference type="PDB" id="3OA9">
    <property type="method" value="X-ray"/>
    <property type="resolution" value="2.90 A"/>
    <property type="chains" value="A/B=73-230"/>
</dbReference>
<dbReference type="PDBsum" id="3D6R"/>
<dbReference type="PDBsum" id="3OA9"/>
<dbReference type="SMR" id="P69270"/>
<dbReference type="EvolutionaryTrace" id="P69270"/>
<dbReference type="GO" id="GO:0030430">
    <property type="term" value="C:host cell cytoplasm"/>
    <property type="evidence" value="ECO:0007669"/>
    <property type="project" value="UniProtKB-SubCell"/>
</dbReference>
<dbReference type="GO" id="GO:0042025">
    <property type="term" value="C:host cell nucleus"/>
    <property type="evidence" value="ECO:0007669"/>
    <property type="project" value="UniProtKB-SubCell"/>
</dbReference>
<dbReference type="GO" id="GO:0030291">
    <property type="term" value="F:protein serine/threonine kinase inhibitor activity"/>
    <property type="evidence" value="ECO:0007669"/>
    <property type="project" value="UniProtKB-KW"/>
</dbReference>
<dbReference type="GO" id="GO:0003723">
    <property type="term" value="F:RNA binding"/>
    <property type="evidence" value="ECO:0007669"/>
    <property type="project" value="UniProtKB-KW"/>
</dbReference>
<dbReference type="GO" id="GO:0039540">
    <property type="term" value="P:symbiont-mediated suppression of host cytoplasmic pattern recognition receptor signaling pathway via inhibition of RIG-I activity"/>
    <property type="evidence" value="ECO:0007669"/>
    <property type="project" value="UniProtKB-KW"/>
</dbReference>
<dbReference type="GO" id="GO:0039657">
    <property type="term" value="P:symbiont-mediated suppression of host gene expression"/>
    <property type="evidence" value="ECO:0007669"/>
    <property type="project" value="UniProtKB-KW"/>
</dbReference>
<dbReference type="GO" id="GO:0039524">
    <property type="term" value="P:symbiont-mediated suppression of host mRNA processing"/>
    <property type="evidence" value="ECO:0007669"/>
    <property type="project" value="UniProtKB-KW"/>
</dbReference>
<dbReference type="GO" id="GO:0039580">
    <property type="term" value="P:symbiont-mediated suppression of host PKR/eIFalpha signaling"/>
    <property type="evidence" value="ECO:0007669"/>
    <property type="project" value="UniProtKB-KW"/>
</dbReference>
<dbReference type="GO" id="GO:0039502">
    <property type="term" value="P:symbiont-mediated suppression of host type I interferon-mediated signaling pathway"/>
    <property type="evidence" value="ECO:0007669"/>
    <property type="project" value="UniProtKB-KW"/>
</dbReference>
<dbReference type="Gene3D" id="3.30.420.330">
    <property type="entry name" value="Influenza virus non-structural protein, effector domain"/>
    <property type="match status" value="1"/>
</dbReference>
<dbReference type="Gene3D" id="1.10.287.10">
    <property type="entry name" value="S15/NS1, RNA-binding"/>
    <property type="match status" value="1"/>
</dbReference>
<dbReference type="HAMAP" id="MF_04066">
    <property type="entry name" value="INFV_NS1"/>
    <property type="match status" value="1"/>
</dbReference>
<dbReference type="InterPro" id="IPR004208">
    <property type="entry name" value="NS1"/>
</dbReference>
<dbReference type="InterPro" id="IPR000256">
    <property type="entry name" value="NS1A"/>
</dbReference>
<dbReference type="InterPro" id="IPR038064">
    <property type="entry name" value="NS1A_effect_dom-like_sf"/>
</dbReference>
<dbReference type="InterPro" id="IPR009068">
    <property type="entry name" value="uS15_NS1_RNA-bd_sf"/>
</dbReference>
<dbReference type="Pfam" id="PF00600">
    <property type="entry name" value="Flu_NS1"/>
    <property type="match status" value="1"/>
</dbReference>
<dbReference type="SUPFAM" id="SSF143021">
    <property type="entry name" value="Ns1 effector domain-like"/>
    <property type="match status" value="1"/>
</dbReference>
<dbReference type="SUPFAM" id="SSF47060">
    <property type="entry name" value="S15/NS1 RNA-binding domain"/>
    <property type="match status" value="1"/>
</dbReference>
<name>NS1_I76A2</name>
<organism>
    <name type="scientific">Influenza A virus (strain A/Duck/Alberta/60/1976 H12N5)</name>
    <dbReference type="NCBI Taxonomy" id="385582"/>
    <lineage>
        <taxon>Viruses</taxon>
        <taxon>Riboviria</taxon>
        <taxon>Orthornavirae</taxon>
        <taxon>Negarnaviricota</taxon>
        <taxon>Polyploviricotina</taxon>
        <taxon>Insthoviricetes</taxon>
        <taxon>Articulavirales</taxon>
        <taxon>Orthomyxoviridae</taxon>
        <taxon>Alphainfluenzavirus</taxon>
        <taxon>Alphainfluenzavirus influenzae</taxon>
        <taxon>Influenza A virus</taxon>
    </lineage>
</organism>
<evidence type="ECO:0000255" key="1">
    <source>
        <dbReference type="HAMAP-Rule" id="MF_04066"/>
    </source>
</evidence>
<evidence type="ECO:0000256" key="2">
    <source>
        <dbReference type="SAM" id="MobiDB-lite"/>
    </source>
</evidence>
<evidence type="ECO:0007829" key="3">
    <source>
        <dbReference type="PDB" id="3D6R"/>
    </source>
</evidence>
<evidence type="ECO:0007829" key="4">
    <source>
        <dbReference type="PDB" id="3OA9"/>
    </source>
</evidence>
<sequence>MDSNTITSFQVDCYLWHIRKLLSMRDMCDAPFDDRLRRDQKALKGRGSTLGLDLRVATMEGKKIVEDILKSETDENLKIAIASSPAPRYITDMSIEEISREWYMLMPRQKITGGLMVKMDQAIMDKRITLKANFSVLFDQLETLVSLRAFTDDGAIVAEISPIPSMPGHSTEDVKNAIGILIGGLEWNDNSIRASENIQRFAWGIRDENGGPPLPPKQKRYMARRVESEV</sequence>
<reference key="1">
    <citation type="journal article" date="1981" name="Virology">
        <title>Nucleotide sequence of the influenza A/duck/Alberta/60/76 virus NS RNA: conservation of the NS1/NS2 overlapping gene structure in a divergent influenza virus RNA segment.</title>
        <authorList>
            <person name="Baez M."/>
            <person name="Zazra J.J."/>
            <person name="Elliott R.M."/>
            <person name="Young J.F."/>
            <person name="Palese P."/>
        </authorList>
    </citation>
    <scope>NUCLEOTIDE SEQUENCE [GENOMIC RNA]</scope>
</reference>
<reference key="2">
    <citation type="journal article" date="2003" name="Virology">
        <title>Intracellular warfare between human influenza viruses and human cells: the roles of the viral NS1 protein.</title>
        <authorList>
            <person name="Krug R.M."/>
            <person name="Yuan W."/>
            <person name="Noah D.L."/>
            <person name="Latham A.G."/>
        </authorList>
    </citation>
    <scope>REVIEW</scope>
</reference>
<accession>P69270</accession>
<accession>P03501</accession>
<accession>P13136</accession>
<gene>
    <name evidence="1" type="primary">NS</name>
</gene>